<evidence type="ECO:0000255" key="1">
    <source>
        <dbReference type="PROSITE-ProRule" id="PRU01258"/>
    </source>
</evidence>
<evidence type="ECO:0000269" key="2">
    <source>
    </source>
</evidence>
<evidence type="ECO:0000305" key="3"/>
<organism>
    <name type="scientific">Pseudoalteromonas piscicida</name>
    <dbReference type="NCBI Taxonomy" id="43662"/>
    <lineage>
        <taxon>Bacteria</taxon>
        <taxon>Pseudomonadati</taxon>
        <taxon>Pseudomonadota</taxon>
        <taxon>Gammaproteobacteria</taxon>
        <taxon>Alteromonadales</taxon>
        <taxon>Pseudoalteromonadaceae</taxon>
        <taxon>Pseudoalteromonas</taxon>
    </lineage>
</organism>
<reference key="1">
    <citation type="journal article" date="1993" name="J. Bacteriol.">
        <title>Cloning, sequence, and expression of a chitinase gene from a marine bacterium, Altermonas sp. strain O-7.</title>
        <authorList>
            <person name="Tsujibo H."/>
            <person name="Orikoshi H."/>
            <person name="Tanno H."/>
            <person name="Fujimoto K."/>
            <person name="Miyamoto K."/>
            <person name="Imada C."/>
            <person name="Okami Y."/>
            <person name="Inamori Y."/>
        </authorList>
    </citation>
    <scope>NUCLEOTIDE SEQUENCE [GENOMIC DNA]</scope>
    <source>
        <strain>O-7</strain>
    </source>
</reference>
<reference key="2">
    <citation type="journal article" date="1992" name="Can. J. Microbiol.">
        <title>Purification, properties, and partial amino acid sequence of chitinase from a marine Alteromonas sp. strain O-7.</title>
        <authorList>
            <person name="Tsujibo H."/>
            <person name="Yoshida Y."/>
            <person name="Miyamoto K."/>
            <person name="Imada C."/>
            <person name="Okami Y."/>
            <person name="Inamori Y."/>
        </authorList>
    </citation>
    <scope>PROTEIN SEQUENCE OF 22-48</scope>
    <scope>CHARACTERIZATION</scope>
    <source>
        <strain>O-7</strain>
    </source>
</reference>
<reference key="3">
    <citation type="journal article" date="1993" name="Biosci. Biotechnol. Biochem.">
        <title>Site-directed mutagenesis of chitinase from Alteromonas sp. strain O-7.</title>
        <authorList>
            <person name="Tsujibo H."/>
            <person name="Orikoshi H."/>
            <person name="Imada C."/>
            <person name="Okami Y."/>
            <person name="Miyamoto K."/>
            <person name="Inamori Y."/>
        </authorList>
    </citation>
    <scope>MUTAGENESIS</scope>
    <source>
        <strain>O-7</strain>
    </source>
</reference>
<protein>
    <recommendedName>
        <fullName>Chitinase A</fullName>
        <shortName>CHI-A</shortName>
        <ecNumber>3.2.1.14</ecNumber>
    </recommendedName>
</protein>
<feature type="signal peptide" evidence="2">
    <location>
        <begin position="1"/>
        <end position="21"/>
    </location>
</feature>
<feature type="chain" id="PRO_0000011904" description="Chitinase A">
    <location>
        <begin position="22"/>
        <end position="820"/>
    </location>
</feature>
<feature type="domain" description="GH18" evidence="1">
    <location>
        <begin position="158"/>
        <end position="588"/>
    </location>
</feature>
<feature type="active site" description="Proton donor" evidence="1">
    <location>
        <position position="313"/>
    </location>
</feature>
<name>CHIA_PSEO7</name>
<keyword id="KW-0119">Carbohydrate metabolism</keyword>
<keyword id="KW-0146">Chitin degradation</keyword>
<keyword id="KW-0903">Direct protein sequencing</keyword>
<keyword id="KW-0326">Glycosidase</keyword>
<keyword id="KW-0378">Hydrolase</keyword>
<keyword id="KW-0624">Polysaccharide degradation</keyword>
<keyword id="KW-0732">Signal</keyword>
<proteinExistence type="evidence at protein level"/>
<comment type="catalytic activity">
    <reaction>
        <text>Random endo-hydrolysis of N-acetyl-beta-D-glucosaminide (1-&gt;4)-beta-linkages in chitin and chitodextrins.</text>
        <dbReference type="EC" id="3.2.1.14"/>
    </reaction>
</comment>
<comment type="activity regulation">
    <text>Stimulated by magnesium ions; inhibited by N-bromosuccinimide and 2-hydroxy-5-nitrobenzyl bromide.</text>
</comment>
<comment type="biophysicochemical properties">
    <phDependence>
        <text>Optimum pH is 8.0.</text>
    </phDependence>
    <temperatureDependence>
        <text>Optimum temperature is 50 degrees Celsius.</text>
    </temperatureDependence>
</comment>
<comment type="similarity">
    <text evidence="3">Belongs to the glycosyl hydrolase 18 family. Chitinase class II subfamily.</text>
</comment>
<dbReference type="EC" id="3.2.1.14"/>
<dbReference type="EMBL" id="AB063629">
    <property type="protein sequence ID" value="BAB79620.1"/>
    <property type="molecule type" value="Genomic_DNA"/>
</dbReference>
<dbReference type="PIR" id="A40633">
    <property type="entry name" value="A40633"/>
</dbReference>
<dbReference type="PIR" id="PC4106">
    <property type="entry name" value="PC4106"/>
</dbReference>
<dbReference type="SMR" id="P32823"/>
<dbReference type="CAZy" id="CBM5">
    <property type="family name" value="Carbohydrate-Binding Module Family 5"/>
</dbReference>
<dbReference type="CAZy" id="GH18">
    <property type="family name" value="Glycoside Hydrolase Family 18"/>
</dbReference>
<dbReference type="GO" id="GO:0005576">
    <property type="term" value="C:extracellular region"/>
    <property type="evidence" value="ECO:0007669"/>
    <property type="project" value="InterPro"/>
</dbReference>
<dbReference type="GO" id="GO:0016020">
    <property type="term" value="C:membrane"/>
    <property type="evidence" value="ECO:0007669"/>
    <property type="project" value="InterPro"/>
</dbReference>
<dbReference type="GO" id="GO:0005509">
    <property type="term" value="F:calcium ion binding"/>
    <property type="evidence" value="ECO:0007669"/>
    <property type="project" value="InterPro"/>
</dbReference>
<dbReference type="GO" id="GO:0030246">
    <property type="term" value="F:carbohydrate binding"/>
    <property type="evidence" value="ECO:0007669"/>
    <property type="project" value="InterPro"/>
</dbReference>
<dbReference type="GO" id="GO:0008061">
    <property type="term" value="F:chitin binding"/>
    <property type="evidence" value="ECO:0007669"/>
    <property type="project" value="InterPro"/>
</dbReference>
<dbReference type="GO" id="GO:0008843">
    <property type="term" value="F:endochitinase activity"/>
    <property type="evidence" value="ECO:0007669"/>
    <property type="project" value="UniProtKB-EC"/>
</dbReference>
<dbReference type="GO" id="GO:0006032">
    <property type="term" value="P:chitin catabolic process"/>
    <property type="evidence" value="ECO:0007669"/>
    <property type="project" value="UniProtKB-KW"/>
</dbReference>
<dbReference type="GO" id="GO:0007156">
    <property type="term" value="P:homophilic cell adhesion via plasma membrane adhesion molecules"/>
    <property type="evidence" value="ECO:0007669"/>
    <property type="project" value="InterPro"/>
</dbReference>
<dbReference type="GO" id="GO:0000272">
    <property type="term" value="P:polysaccharide catabolic process"/>
    <property type="evidence" value="ECO:0007669"/>
    <property type="project" value="UniProtKB-KW"/>
</dbReference>
<dbReference type="CDD" id="cd12215">
    <property type="entry name" value="ChiC_BD"/>
    <property type="match status" value="1"/>
</dbReference>
<dbReference type="CDD" id="cd02848">
    <property type="entry name" value="E_set_Chitinase_N"/>
    <property type="match status" value="1"/>
</dbReference>
<dbReference type="CDD" id="cd06548">
    <property type="entry name" value="GH18_chitinase"/>
    <property type="match status" value="1"/>
</dbReference>
<dbReference type="Gene3D" id="3.10.50.10">
    <property type="match status" value="1"/>
</dbReference>
<dbReference type="Gene3D" id="2.10.10.20">
    <property type="entry name" value="Carbohydrate-binding module superfamily 5/12"/>
    <property type="match status" value="1"/>
</dbReference>
<dbReference type="Gene3D" id="3.20.20.80">
    <property type="entry name" value="Glycosidases"/>
    <property type="match status" value="1"/>
</dbReference>
<dbReference type="Gene3D" id="2.60.40.10">
    <property type="entry name" value="Immunoglobulins"/>
    <property type="match status" value="3"/>
</dbReference>
<dbReference type="InterPro" id="IPR002126">
    <property type="entry name" value="Cadherin-like_dom"/>
</dbReference>
<dbReference type="InterPro" id="IPR003610">
    <property type="entry name" value="CBM5/12"/>
</dbReference>
<dbReference type="InterPro" id="IPR036573">
    <property type="entry name" value="CBM_sf_5/12"/>
</dbReference>
<dbReference type="InterPro" id="IPR011583">
    <property type="entry name" value="Chitinase_II/V-like_cat"/>
</dbReference>
<dbReference type="InterPro" id="IPR029070">
    <property type="entry name" value="Chitinase_insertion_sf"/>
</dbReference>
<dbReference type="InterPro" id="IPR013540">
    <property type="entry name" value="ChitinaseA_N"/>
</dbReference>
<dbReference type="InterPro" id="IPR001223">
    <property type="entry name" value="Glyco_hydro18_cat"/>
</dbReference>
<dbReference type="InterPro" id="IPR001579">
    <property type="entry name" value="Glyco_hydro_18_chit_AS"/>
</dbReference>
<dbReference type="InterPro" id="IPR017853">
    <property type="entry name" value="Glycoside_hydrolase_SF"/>
</dbReference>
<dbReference type="InterPro" id="IPR050314">
    <property type="entry name" value="Glycosyl_Hydrlase_18"/>
</dbReference>
<dbReference type="InterPro" id="IPR013783">
    <property type="entry name" value="Ig-like_fold"/>
</dbReference>
<dbReference type="InterPro" id="IPR014756">
    <property type="entry name" value="Ig_E-set"/>
</dbReference>
<dbReference type="InterPro" id="IPR022409">
    <property type="entry name" value="PKD/Chitinase_dom"/>
</dbReference>
<dbReference type="PANTHER" id="PTHR11177">
    <property type="entry name" value="CHITINASE"/>
    <property type="match status" value="1"/>
</dbReference>
<dbReference type="PANTHER" id="PTHR11177:SF317">
    <property type="entry name" value="CHITINASE 12-RELATED"/>
    <property type="match status" value="1"/>
</dbReference>
<dbReference type="Pfam" id="PF02839">
    <property type="entry name" value="CBM_5_12"/>
    <property type="match status" value="1"/>
</dbReference>
<dbReference type="Pfam" id="PF08329">
    <property type="entry name" value="ChitinaseA_N"/>
    <property type="match status" value="1"/>
</dbReference>
<dbReference type="Pfam" id="PF00704">
    <property type="entry name" value="Glyco_hydro_18"/>
    <property type="match status" value="1"/>
</dbReference>
<dbReference type="SMART" id="SM00495">
    <property type="entry name" value="ChtBD3"/>
    <property type="match status" value="1"/>
</dbReference>
<dbReference type="SMART" id="SM00636">
    <property type="entry name" value="Glyco_18"/>
    <property type="match status" value="1"/>
</dbReference>
<dbReference type="SMART" id="SM00089">
    <property type="entry name" value="PKD"/>
    <property type="match status" value="2"/>
</dbReference>
<dbReference type="SUPFAM" id="SSF51445">
    <property type="entry name" value="(Trans)glycosidases"/>
    <property type="match status" value="1"/>
</dbReference>
<dbReference type="SUPFAM" id="SSF51055">
    <property type="entry name" value="Carbohydrate binding domain"/>
    <property type="match status" value="1"/>
</dbReference>
<dbReference type="SUPFAM" id="SSF54556">
    <property type="entry name" value="Chitinase insertion domain"/>
    <property type="match status" value="1"/>
</dbReference>
<dbReference type="SUPFAM" id="SSF81296">
    <property type="entry name" value="E set domains"/>
    <property type="match status" value="1"/>
</dbReference>
<dbReference type="PROSITE" id="PS01095">
    <property type="entry name" value="GH18_1"/>
    <property type="match status" value="1"/>
</dbReference>
<dbReference type="PROSITE" id="PS51910">
    <property type="entry name" value="GH18_2"/>
    <property type="match status" value="1"/>
</dbReference>
<accession>P32823</accession>
<gene>
    <name type="primary">chiA</name>
</gene>
<sequence length="820" mass="87346">MKLNKITSYIGFALLSGGALAAPSTPTLDWQPQQYSFVEVNVDGLGSYKQLVKAKDVVDISIKWNAWSGSGGDNYKVYFDDLLVNQGSLPAGTKSGVVQFPYTKSGRHQLYLELCEGTVCARSAGKEIVIADTDGAHLAPLPMNVDPNNRNNGTIPGRVTGAYFVEWGIYGRNYDVTKIPAHNLSHILYGFIPICGPNESLKSIEIGNSWRALQTACADSQDYEVVIHDPWAAVQKSMPGVDAKDPIRGVYSQLMALKQRYPDLKILPSVGGWTLSDPFHGFTNKANRDTFVASVKQFLKTWKFYDGVDIDWEFPGGDGPNPDLGDPINDGPAYVALMQELRAMLDELEAETGRQYELTSAIGAGYDKIEDVDYQAAQQYMDYIFAMTYDFYGAWNNETGHQTGIYCGSHLSTDECNGTGVDDNGVPRKGPAYTGDHAIQLLLQQGVQPSKLVMGVAMYGRGWEGVLDANAAIPGNPMTAPGNGPLTGSTSEGVWEPGIMDYKAIAANAVGQGGSGVNGYEVGYDEQAQAAYVWNRSNGKLITYDSPRSVIAKGQYANTHQLAGLFGWEIDADNGDILNAMYDGLTAGEIPNRAPTIGVSGPINVTSGQVVNVDAQASDLDNDPLTYSWVAAPGLALSANNTAAVAVTAPSVAQQTSYDLTVTVNDGALSTTKTIVVVVNPEGANAAPVVTPVSDISVNEGASATVNVSATDPEGAALSYSWSVPAELSVANGSSATITAANVTADTTVPVTVTVSDGVNAVDTTFNVTIKDGAEYPTWDRSTVYVGGDRVIHNSNVFEAKWWTQGEEPGTADVWKAVTN</sequence>